<reference key="1">
    <citation type="journal article" date="1996" name="Science">
        <title>Complete genome sequence of the methanogenic archaeon, Methanococcus jannaschii.</title>
        <authorList>
            <person name="Bult C.J."/>
            <person name="White O."/>
            <person name="Olsen G.J."/>
            <person name="Zhou L."/>
            <person name="Fleischmann R.D."/>
            <person name="Sutton G.G."/>
            <person name="Blake J.A."/>
            <person name="FitzGerald L.M."/>
            <person name="Clayton R.A."/>
            <person name="Gocayne J.D."/>
            <person name="Kerlavage A.R."/>
            <person name="Dougherty B.A."/>
            <person name="Tomb J.-F."/>
            <person name="Adams M.D."/>
            <person name="Reich C.I."/>
            <person name="Overbeek R."/>
            <person name="Kirkness E.F."/>
            <person name="Weinstock K.G."/>
            <person name="Merrick J.M."/>
            <person name="Glodek A."/>
            <person name="Scott J.L."/>
            <person name="Geoghagen N.S.M."/>
            <person name="Weidman J.F."/>
            <person name="Fuhrmann J.L."/>
            <person name="Nguyen D."/>
            <person name="Utterback T.R."/>
            <person name="Kelley J.M."/>
            <person name="Peterson J.D."/>
            <person name="Sadow P.W."/>
            <person name="Hanna M.C."/>
            <person name="Cotton M.D."/>
            <person name="Roberts K.M."/>
            <person name="Hurst M.A."/>
            <person name="Kaine B.P."/>
            <person name="Borodovsky M."/>
            <person name="Klenk H.-P."/>
            <person name="Fraser C.M."/>
            <person name="Smith H.O."/>
            <person name="Woese C.R."/>
            <person name="Venter J.C."/>
        </authorList>
    </citation>
    <scope>NUCLEOTIDE SEQUENCE [LARGE SCALE GENOMIC DNA]</scope>
    <source>
        <strain>ATCC 43067 / DSM 2661 / JAL-1 / JCM 10045 / NBRC 100440</strain>
    </source>
</reference>
<reference key="2">
    <citation type="journal article" date="2004" name="Arch. Microbiol.">
        <title>Glucose-6-phosphate isomerase from the hyperthermophilic archaeon Methanococcus jannaschii: characterization of the first archaeal member of the phosphoglucose isomerase superfamily.</title>
        <authorList>
            <person name="Rudolph B."/>
            <person name="Hansen T."/>
            <person name="Schonheit P."/>
        </authorList>
    </citation>
    <scope>FUNCTION AS A GLUCOSE-6-PHOSPHATE ISOMERASE</scope>
    <scope>BIOPHYSICOCHEMICAL PROPERTIES</scope>
    <scope>ACTIVITY REGULATION</scope>
    <scope>SUBUNIT</scope>
</reference>
<reference key="3">
    <citation type="journal article" date="2006" name="Biochemistry">
        <title>Methylglyoxal is an intermediate in the biosynthesis of 6-deoxy-5-ketofructose-1-phosphate: a precursor for aromatic amino acid biosynthesis in Methanocaldococcus jannaschii.</title>
        <authorList>
            <person name="White R.H."/>
            <person name="Xu H."/>
        </authorList>
    </citation>
    <scope>FUNCTION AS A GLUCOSE-6-PHOSPHATE ISOMERASE</scope>
</reference>
<sequence length="401" mass="45675">MLSYDYENALKVGEISLEDINKVDFANAYSNLMEKLDNGVVGFRDVIYDENLDKYKSLNGYENVVVIGMGGSILGTMAIYYAISPFNNNAYFIDNSDPEKTLSILKKVDLNESIIYIISKSGNTLETLVNYYLIKKRIEKLNSFKGKLVFITNGGKLKREAEKNNYDIFSIPENVPGRFSVFTAVGLAPLYSLGVDISKILEGAREMDKICQNEDILKNPALLNGVIHYLYDKRGKDISVIMSYVESLKYFGDWYKQLIGESLGKNKHGITPLLSIGAKDQHSLLQLYMDGKKDKIITFMVAKKYRLDEEIEFEDINDEKISCRYSDIIRSQQKATEIALTNNGVPNVRITLDEINEMAMGALLYMYEMQVGFMGELYNINAYNQPAVEEEKKICWRLIKQ</sequence>
<dbReference type="EC" id="5.3.1.9" evidence="1"/>
<dbReference type="EMBL" id="L77117">
    <property type="protein sequence ID" value="AAB99624.1"/>
    <property type="molecule type" value="Genomic_DNA"/>
</dbReference>
<dbReference type="PIR" id="D64500">
    <property type="entry name" value="D64500"/>
</dbReference>
<dbReference type="RefSeq" id="WP_010871130.1">
    <property type="nucleotide sequence ID" value="NC_000909.1"/>
</dbReference>
<dbReference type="SMR" id="Q59000"/>
<dbReference type="FunCoup" id="Q59000">
    <property type="interactions" value="216"/>
</dbReference>
<dbReference type="STRING" id="243232.MJ_1605"/>
<dbReference type="PaxDb" id="243232-MJ_1605"/>
<dbReference type="EnsemblBacteria" id="AAB99624">
    <property type="protein sequence ID" value="AAB99624"/>
    <property type="gene ID" value="MJ_1605"/>
</dbReference>
<dbReference type="GeneID" id="1452514"/>
<dbReference type="KEGG" id="mja:MJ_1605"/>
<dbReference type="eggNOG" id="arCOG00052">
    <property type="taxonomic scope" value="Archaea"/>
</dbReference>
<dbReference type="HOGENOM" id="CLU_037303_1_0_2"/>
<dbReference type="InParanoid" id="Q59000"/>
<dbReference type="OrthoDB" id="168618at2157"/>
<dbReference type="PhylomeDB" id="Q59000"/>
<dbReference type="SABIO-RK" id="Q59000"/>
<dbReference type="UniPathway" id="UPA00109">
    <property type="reaction ID" value="UER00181"/>
</dbReference>
<dbReference type="UniPathway" id="UPA00138"/>
<dbReference type="Proteomes" id="UP000000805">
    <property type="component" value="Chromosome"/>
</dbReference>
<dbReference type="GO" id="GO:0005829">
    <property type="term" value="C:cytosol"/>
    <property type="evidence" value="ECO:0000318"/>
    <property type="project" value="GO_Central"/>
</dbReference>
<dbReference type="GO" id="GO:0097367">
    <property type="term" value="F:carbohydrate derivative binding"/>
    <property type="evidence" value="ECO:0007669"/>
    <property type="project" value="InterPro"/>
</dbReference>
<dbReference type="GO" id="GO:0004347">
    <property type="term" value="F:glucose-6-phosphate isomerase activity"/>
    <property type="evidence" value="ECO:0000314"/>
    <property type="project" value="UniProtKB"/>
</dbReference>
<dbReference type="GO" id="GO:0048029">
    <property type="term" value="F:monosaccharide binding"/>
    <property type="evidence" value="ECO:0000318"/>
    <property type="project" value="GO_Central"/>
</dbReference>
<dbReference type="GO" id="GO:0006094">
    <property type="term" value="P:gluconeogenesis"/>
    <property type="evidence" value="ECO:0000318"/>
    <property type="project" value="GO_Central"/>
</dbReference>
<dbReference type="GO" id="GO:0051156">
    <property type="term" value="P:glucose 6-phosphate metabolic process"/>
    <property type="evidence" value="ECO:0000318"/>
    <property type="project" value="GO_Central"/>
</dbReference>
<dbReference type="GO" id="GO:0006096">
    <property type="term" value="P:glycolytic process"/>
    <property type="evidence" value="ECO:0000318"/>
    <property type="project" value="GO_Central"/>
</dbReference>
<dbReference type="CDD" id="cd05015">
    <property type="entry name" value="SIS_PGI_1"/>
    <property type="match status" value="1"/>
</dbReference>
<dbReference type="CDD" id="cd05016">
    <property type="entry name" value="SIS_PGI_2"/>
    <property type="match status" value="1"/>
</dbReference>
<dbReference type="FunFam" id="3.40.50.10490:FF:000071">
    <property type="entry name" value="Glucose-6-phosphate isomerase"/>
    <property type="match status" value="1"/>
</dbReference>
<dbReference type="Gene3D" id="3.40.50.10490">
    <property type="entry name" value="Glucose-6-phosphate isomerase like protein, domain 1"/>
    <property type="match status" value="2"/>
</dbReference>
<dbReference type="HAMAP" id="MF_00473">
    <property type="entry name" value="G6P_isomerase"/>
    <property type="match status" value="1"/>
</dbReference>
<dbReference type="InterPro" id="IPR001672">
    <property type="entry name" value="G6P_Isomerase"/>
</dbReference>
<dbReference type="InterPro" id="IPR053509">
    <property type="entry name" value="GPI"/>
</dbReference>
<dbReference type="InterPro" id="IPR018189">
    <property type="entry name" value="Phosphoglucose_isomerase_CS"/>
</dbReference>
<dbReference type="InterPro" id="IPR046348">
    <property type="entry name" value="SIS_dom_sf"/>
</dbReference>
<dbReference type="InterPro" id="IPR035476">
    <property type="entry name" value="SIS_PGI_1"/>
</dbReference>
<dbReference type="InterPro" id="IPR035482">
    <property type="entry name" value="SIS_PGI_2"/>
</dbReference>
<dbReference type="NCBIfam" id="NF040629">
    <property type="entry name" value="PGI_Meth"/>
    <property type="match status" value="1"/>
</dbReference>
<dbReference type="PANTHER" id="PTHR11469">
    <property type="entry name" value="GLUCOSE-6-PHOSPHATE ISOMERASE"/>
    <property type="match status" value="1"/>
</dbReference>
<dbReference type="PANTHER" id="PTHR11469:SF1">
    <property type="entry name" value="GLUCOSE-6-PHOSPHATE ISOMERASE"/>
    <property type="match status" value="1"/>
</dbReference>
<dbReference type="Pfam" id="PF00342">
    <property type="entry name" value="PGI"/>
    <property type="match status" value="1"/>
</dbReference>
<dbReference type="PRINTS" id="PR00662">
    <property type="entry name" value="G6PISOMERASE"/>
</dbReference>
<dbReference type="SUPFAM" id="SSF53697">
    <property type="entry name" value="SIS domain"/>
    <property type="match status" value="1"/>
</dbReference>
<dbReference type="PROSITE" id="PS00765">
    <property type="entry name" value="P_GLUCOSE_ISOMERASE_1"/>
    <property type="match status" value="1"/>
</dbReference>
<dbReference type="PROSITE" id="PS00174">
    <property type="entry name" value="P_GLUCOSE_ISOMERASE_2"/>
    <property type="match status" value="1"/>
</dbReference>
<dbReference type="PROSITE" id="PS51463">
    <property type="entry name" value="P_GLUCOSE_ISOMERASE_3"/>
    <property type="match status" value="1"/>
</dbReference>
<protein>
    <recommendedName>
        <fullName evidence="1">Glucose-6-phosphate isomerase</fullName>
        <shortName evidence="1">GPI</shortName>
        <ecNumber evidence="1">5.3.1.9</ecNumber>
    </recommendedName>
    <alternativeName>
        <fullName evidence="1">Phosphoglucose isomerase</fullName>
        <shortName evidence="1">PGI</shortName>
    </alternativeName>
    <alternativeName>
        <fullName evidence="1">Phosphohexose isomerase</fullName>
        <shortName evidence="1">PHI</shortName>
    </alternativeName>
</protein>
<name>G6PI_METJA</name>
<evidence type="ECO:0000255" key="1">
    <source>
        <dbReference type="HAMAP-Rule" id="MF_00473"/>
    </source>
</evidence>
<evidence type="ECO:0000269" key="2">
    <source>
    </source>
</evidence>
<evidence type="ECO:0000269" key="3">
    <source>
    </source>
</evidence>
<evidence type="ECO:0000305" key="4"/>
<proteinExistence type="evidence at protein level"/>
<comment type="function">
    <text evidence="2 3">Catalyzes the isomerization of glucose-6-P to fructose-6-P.</text>
</comment>
<comment type="catalytic activity">
    <reaction evidence="1">
        <text>alpha-D-glucose 6-phosphate = beta-D-fructose 6-phosphate</text>
        <dbReference type="Rhea" id="RHEA:11816"/>
        <dbReference type="ChEBI" id="CHEBI:57634"/>
        <dbReference type="ChEBI" id="CHEBI:58225"/>
        <dbReference type="EC" id="5.3.1.9"/>
    </reaction>
</comment>
<comment type="activity regulation">
    <text evidence="2">Competively inhibited by 6-phosphogluconate and erythrose 4-phosphate.</text>
</comment>
<comment type="biophysicochemical properties">
    <kinetics>
        <KM evidence="2">0.04 mM for F6P (at pH 6.3 and 50 degrees Celsius)</KM>
        <KM evidence="2">1 mM for G6P (at pH 6.3 and 50 degrees Celsius)</KM>
        <Vmax evidence="2">9.0 umol/min/mg enzyme for G6P (at pH 6.3 and 50 degrees Celsius)</Vmax>
        <Vmax evidence="2">21.0 umol/min/mg enzyme for F6P (at pH 6.3 and 50 degrees Celsius)</Vmax>
    </kinetics>
    <phDependence>
        <text evidence="2">Optimum pH is 6.3. 50% remaining activity is observed at pH 5.3 and pH 7.</text>
    </phDependence>
    <temperatureDependence>
        <text evidence="2">Optimum temperature is 89 degrees Celsius. It does not lose activity upon incubation at 80 degrees Celsius for about 120 minutes and still has a half-life at 95 degrees Celsius of 40 minutes. At 100 degrees Celsius, an almost complete loss of activity is observed after 30 min.</text>
    </temperatureDependence>
</comment>
<comment type="pathway">
    <text evidence="1">Carbohydrate biosynthesis; gluconeogenesis.</text>
</comment>
<comment type="pathway">
    <text evidence="1">Carbohydrate degradation; glycolysis; D-glyceraldehyde 3-phosphate and glycerone phosphate from D-glucose: step 2/4.</text>
</comment>
<comment type="subunit">
    <text evidence="2">Homodimer.</text>
</comment>
<comment type="subcellular location">
    <subcellularLocation>
        <location evidence="1">Cytoplasm</location>
    </subcellularLocation>
</comment>
<comment type="similarity">
    <text evidence="1 4">Belongs to the GPI family.</text>
</comment>
<gene>
    <name evidence="1" type="primary">pgi</name>
    <name type="ordered locus">MJ1605</name>
</gene>
<keyword id="KW-0963">Cytoplasm</keyword>
<keyword id="KW-0312">Gluconeogenesis</keyword>
<keyword id="KW-0324">Glycolysis</keyword>
<keyword id="KW-0413">Isomerase</keyword>
<keyword id="KW-1185">Reference proteome</keyword>
<organism>
    <name type="scientific">Methanocaldococcus jannaschii (strain ATCC 43067 / DSM 2661 / JAL-1 / JCM 10045 / NBRC 100440)</name>
    <name type="common">Methanococcus jannaschii</name>
    <dbReference type="NCBI Taxonomy" id="243232"/>
    <lineage>
        <taxon>Archaea</taxon>
        <taxon>Methanobacteriati</taxon>
        <taxon>Methanobacteriota</taxon>
        <taxon>Methanomada group</taxon>
        <taxon>Methanococci</taxon>
        <taxon>Methanococcales</taxon>
        <taxon>Methanocaldococcaceae</taxon>
        <taxon>Methanocaldococcus</taxon>
    </lineage>
</organism>
<accession>Q59000</accession>
<feature type="chain" id="PRO_0000180780" description="Glucose-6-phosphate isomerase">
    <location>
        <begin position="1"/>
        <end position="401"/>
    </location>
</feature>
<feature type="active site" description="Proton donor" evidence="1">
    <location>
        <position position="261"/>
    </location>
</feature>
<feature type="active site" evidence="1">
    <location>
        <position position="282"/>
    </location>
</feature>
<feature type="active site" evidence="1">
    <location>
        <position position="392"/>
    </location>
</feature>